<evidence type="ECO:0000255" key="1">
    <source>
        <dbReference type="HAMAP-Rule" id="MF_00483"/>
    </source>
</evidence>
<keyword id="KW-0963">Cytoplasm</keyword>
<keyword id="KW-0235">DNA replication</keyword>
<keyword id="KW-0238">DNA-binding</keyword>
<dbReference type="EMBL" id="AL513382">
    <property type="protein sequence ID" value="CAD01897.1"/>
    <property type="molecule type" value="Genomic_DNA"/>
</dbReference>
<dbReference type="EMBL" id="AE014613">
    <property type="protein sequence ID" value="AAO68986.1"/>
    <property type="molecule type" value="Genomic_DNA"/>
</dbReference>
<dbReference type="RefSeq" id="NP_456062.1">
    <property type="nucleotide sequence ID" value="NC_003198.1"/>
</dbReference>
<dbReference type="RefSeq" id="WP_000092483.1">
    <property type="nucleotide sequence ID" value="NZ_WSUR01000011.1"/>
</dbReference>
<dbReference type="SMR" id="Q8Z6R7"/>
<dbReference type="STRING" id="220341.gene:17585587"/>
<dbReference type="KEGG" id="stt:t1338"/>
<dbReference type="KEGG" id="sty:STY1652"/>
<dbReference type="PATRIC" id="fig|220341.7.peg.1663"/>
<dbReference type="eggNOG" id="ENOG502Z895">
    <property type="taxonomic scope" value="Bacteria"/>
</dbReference>
<dbReference type="HOGENOM" id="CLU_078181_0_0_6"/>
<dbReference type="OMA" id="FGWANKN"/>
<dbReference type="OrthoDB" id="6298545at2"/>
<dbReference type="Proteomes" id="UP000000541">
    <property type="component" value="Chromosome"/>
</dbReference>
<dbReference type="Proteomes" id="UP000002670">
    <property type="component" value="Chromosome"/>
</dbReference>
<dbReference type="GO" id="GO:0005737">
    <property type="term" value="C:cytoplasm"/>
    <property type="evidence" value="ECO:0007669"/>
    <property type="project" value="UniProtKB-SubCell"/>
</dbReference>
<dbReference type="GO" id="GO:0003677">
    <property type="term" value="F:DNA binding"/>
    <property type="evidence" value="ECO:0007669"/>
    <property type="project" value="UniProtKB-UniRule"/>
</dbReference>
<dbReference type="GO" id="GO:0006274">
    <property type="term" value="P:DNA replication termination"/>
    <property type="evidence" value="ECO:0007669"/>
    <property type="project" value="UniProtKB-UniRule"/>
</dbReference>
<dbReference type="Gene3D" id="3.30.54.10">
    <property type="match status" value="1"/>
</dbReference>
<dbReference type="Gene3D" id="3.50.14.10">
    <property type="entry name" value="Replication terminator Tus, domain 1 superfamily/Replication terminator Tus"/>
    <property type="match status" value="1"/>
</dbReference>
<dbReference type="HAMAP" id="MF_00483">
    <property type="entry name" value="Rep_term_Tus"/>
    <property type="match status" value="1"/>
</dbReference>
<dbReference type="InterPro" id="IPR008865">
    <property type="entry name" value="DNA_replication_term_site-bd"/>
</dbReference>
<dbReference type="InterPro" id="IPR036381">
    <property type="entry name" value="Tus_dom1"/>
</dbReference>
<dbReference type="InterPro" id="IPR036384">
    <property type="entry name" value="Tus_sf"/>
</dbReference>
<dbReference type="NCBIfam" id="TIGR02648">
    <property type="entry name" value="rep_term_tus"/>
    <property type="match status" value="1"/>
</dbReference>
<dbReference type="Pfam" id="PF05472">
    <property type="entry name" value="Ter"/>
    <property type="match status" value="1"/>
</dbReference>
<dbReference type="SUPFAM" id="SSF56596">
    <property type="entry name" value="Replication terminator protein (Tus)"/>
    <property type="match status" value="1"/>
</dbReference>
<protein>
    <recommendedName>
        <fullName evidence="1">DNA replication terminus site-binding protein</fullName>
        <shortName evidence="1">Ter-binding protein</shortName>
    </recommendedName>
</protein>
<comment type="function">
    <text evidence="1">Trans-acting protein required for termination of DNA replication. Binds to DNA replication terminator sequences (terA to terF) to prevent the passage of replication forks. The termination efficiency will be affected by the affinity of this protein for the terminator sequence.</text>
</comment>
<comment type="subcellular location">
    <subcellularLocation>
        <location evidence="1">Cytoplasm</location>
    </subcellularLocation>
</comment>
<comment type="similarity">
    <text evidence="1">Belongs to the Tus family.</text>
</comment>
<reference key="1">
    <citation type="journal article" date="2001" name="Nature">
        <title>Complete genome sequence of a multiple drug resistant Salmonella enterica serovar Typhi CT18.</title>
        <authorList>
            <person name="Parkhill J."/>
            <person name="Dougan G."/>
            <person name="James K.D."/>
            <person name="Thomson N.R."/>
            <person name="Pickard D."/>
            <person name="Wain J."/>
            <person name="Churcher C.M."/>
            <person name="Mungall K.L."/>
            <person name="Bentley S.D."/>
            <person name="Holden M.T.G."/>
            <person name="Sebaihia M."/>
            <person name="Baker S."/>
            <person name="Basham D."/>
            <person name="Brooks K."/>
            <person name="Chillingworth T."/>
            <person name="Connerton P."/>
            <person name="Cronin A."/>
            <person name="Davis P."/>
            <person name="Davies R.M."/>
            <person name="Dowd L."/>
            <person name="White N."/>
            <person name="Farrar J."/>
            <person name="Feltwell T."/>
            <person name="Hamlin N."/>
            <person name="Haque A."/>
            <person name="Hien T.T."/>
            <person name="Holroyd S."/>
            <person name="Jagels K."/>
            <person name="Krogh A."/>
            <person name="Larsen T.S."/>
            <person name="Leather S."/>
            <person name="Moule S."/>
            <person name="O'Gaora P."/>
            <person name="Parry C."/>
            <person name="Quail M.A."/>
            <person name="Rutherford K.M."/>
            <person name="Simmonds M."/>
            <person name="Skelton J."/>
            <person name="Stevens K."/>
            <person name="Whitehead S."/>
            <person name="Barrell B.G."/>
        </authorList>
    </citation>
    <scope>NUCLEOTIDE SEQUENCE [LARGE SCALE GENOMIC DNA]</scope>
    <source>
        <strain>CT18</strain>
    </source>
</reference>
<reference key="2">
    <citation type="journal article" date="2003" name="J. Bacteriol.">
        <title>Comparative genomics of Salmonella enterica serovar Typhi strains Ty2 and CT18.</title>
        <authorList>
            <person name="Deng W."/>
            <person name="Liou S.-R."/>
            <person name="Plunkett G. III"/>
            <person name="Mayhew G.F."/>
            <person name="Rose D.J."/>
            <person name="Burland V."/>
            <person name="Kodoyianni V."/>
            <person name="Schwartz D.C."/>
            <person name="Blattner F.R."/>
        </authorList>
    </citation>
    <scope>NUCLEOTIDE SEQUENCE [LARGE SCALE GENOMIC DNA]</scope>
    <source>
        <strain>ATCC 700931 / Ty2</strain>
    </source>
</reference>
<name>TUS_SALTI</name>
<proteinExistence type="inferred from homology"/>
<gene>
    <name evidence="1" type="primary">tus</name>
    <name type="ordered locus">STY1652</name>
    <name type="ordered locus">t1338</name>
</gene>
<organism>
    <name type="scientific">Salmonella typhi</name>
    <dbReference type="NCBI Taxonomy" id="90370"/>
    <lineage>
        <taxon>Bacteria</taxon>
        <taxon>Pseudomonadati</taxon>
        <taxon>Pseudomonadota</taxon>
        <taxon>Gammaproteobacteria</taxon>
        <taxon>Enterobacterales</taxon>
        <taxon>Enterobacteriaceae</taxon>
        <taxon>Salmonella</taxon>
    </lineage>
</organism>
<accession>Q8Z6R7</accession>
<sequence>MSRYDLVERLNGTFRQIEQHLAALSDNLQQHSLLIASVFSLPQVTKEAEHAPLDTIEVTQHLGKEAEALALRHYRHLFIQQQSENRSSKAAVRLPGVLCYQVDNATQLDLENQVQRINQLKTTFEQMVTVESGLPSAARFEWVHRHLPGLITLNAYRTLTLINNPATIRFGWANKHIIKNLSRDEVLSQLKKSLASPRSVPPWTREQWQFKLEREYQDIAALPQQAKLKIKRPVKVQPIARIWYKGQQKQVQHACPSPIIALINTDNGAGVPDIGGLENYDADNIQHRFKPQAQPLRLIIPRLHLYVAD</sequence>
<feature type="chain" id="PRO_0000049419" description="DNA replication terminus site-binding protein">
    <location>
        <begin position="1"/>
        <end position="309"/>
    </location>
</feature>